<feature type="signal peptide" evidence="1">
    <location>
        <begin position="1"/>
        <end position="23"/>
    </location>
</feature>
<feature type="chain" id="PRO_0000106100" description="Non-structural protein 7">
    <location>
        <begin position="24"/>
        <end position="78"/>
    </location>
</feature>
<feature type="transmembrane region" description="Helical" evidence="1">
    <location>
        <begin position="56"/>
        <end position="76"/>
    </location>
</feature>
<comment type="function">
    <text>May function in the formation of membrane-bound replication complexes or in the assembly of the virus.</text>
</comment>
<comment type="subcellular location">
    <subcellularLocation>
        <location evidence="2">Host membrane</location>
        <topology evidence="2">Single-pass membrane protein</topology>
    </subcellularLocation>
</comment>
<comment type="similarity">
    <text evidence="2">Belongs to the coronaviruses ns7/ns7a protein family.</text>
</comment>
<name>NS7_CVPR8</name>
<reference key="1">
    <citation type="journal article" date="1991" name="Virus Res.">
        <title>The cloning and sequencing of the virion protein genes from a British isolate of porcine respiratory coronavirus: comparison with transmissible gastroenteritis virus genes.</title>
        <authorList>
            <person name="Britton P."/>
            <person name="Mawditt K.L."/>
            <person name="Page K.W."/>
        </authorList>
    </citation>
    <scope>NUCLEOTIDE SEQUENCE [GENOMIC RNA]</scope>
</reference>
<keyword id="KW-1043">Host membrane</keyword>
<keyword id="KW-0472">Membrane</keyword>
<keyword id="KW-0732">Signal</keyword>
<keyword id="KW-0812">Transmembrane</keyword>
<keyword id="KW-1133">Transmembrane helix</keyword>
<protein>
    <recommendedName>
        <fullName>Non-structural protein 7</fullName>
        <shortName>ns7</shortName>
    </recommendedName>
    <alternativeName>
        <fullName>9 kDa hydrophobic protein</fullName>
        <shortName>HP</shortName>
    </alternativeName>
    <alternativeName>
        <fullName>Accessory protein 7</fullName>
    </alternativeName>
    <alternativeName>
        <fullName>X3 protein</fullName>
    </alternativeName>
</protein>
<evidence type="ECO:0000255" key="1"/>
<evidence type="ECO:0000305" key="2"/>
<accession>P69612</accession>
<accession>P24416</accession>
<accession>P33466</accession>
<proteinExistence type="inferred from homology"/>
<gene>
    <name type="ORF">7</name>
</gene>
<sequence length="78" mass="9058">MLVLLQAVCITVLTLLLIGRLQLLERLLLNHSFNLKTVDDFNILYRSLAETRLLKVVLRLIFLVLLGFCCYRLLVILM</sequence>
<dbReference type="EMBL" id="X60056">
    <property type="protein sequence ID" value="CAA42658.1"/>
    <property type="molecule type" value="Genomic_RNA"/>
</dbReference>
<dbReference type="PIR" id="S24283">
    <property type="entry name" value="S24283"/>
</dbReference>
<dbReference type="GO" id="GO:0033644">
    <property type="term" value="C:host cell membrane"/>
    <property type="evidence" value="ECO:0007669"/>
    <property type="project" value="UniProtKB-SubCell"/>
</dbReference>
<dbReference type="GO" id="GO:0016020">
    <property type="term" value="C:membrane"/>
    <property type="evidence" value="ECO:0007669"/>
    <property type="project" value="UniProtKB-KW"/>
</dbReference>
<dbReference type="InterPro" id="IPR003449">
    <property type="entry name" value="Corona_7"/>
</dbReference>
<dbReference type="Pfam" id="PF02398">
    <property type="entry name" value="Corona_7"/>
    <property type="match status" value="2"/>
</dbReference>
<organism>
    <name type="scientific">Porcine respiratory coronavirus (strain 86/137004 / isolate British)</name>
    <name type="common">PRCoV</name>
    <name type="synonym">PRCV</name>
    <dbReference type="NCBI Taxonomy" id="33736"/>
    <lineage>
        <taxon>Viruses</taxon>
        <taxon>Riboviria</taxon>
        <taxon>Orthornavirae</taxon>
        <taxon>Pisuviricota</taxon>
        <taxon>Pisoniviricetes</taxon>
        <taxon>Nidovirales</taxon>
        <taxon>Cornidovirineae</taxon>
        <taxon>Coronaviridae</taxon>
        <taxon>Orthocoronavirinae</taxon>
        <taxon>Alphacoronavirus</taxon>
        <taxon>Tegacovirus</taxon>
        <taxon>Alphacoronavirus 1</taxon>
    </lineage>
</organism>
<organismHost>
    <name type="scientific">Sus scrofa</name>
    <name type="common">Pig</name>
    <dbReference type="NCBI Taxonomy" id="9823"/>
</organismHost>